<reference key="1">
    <citation type="submission" date="2006-06" db="EMBL/GenBank/DDBJ databases">
        <title>Complete sequence of chromosome of Mesorhizobium sp. BNC1.</title>
        <authorList>
            <consortium name="US DOE Joint Genome Institute"/>
            <person name="Copeland A."/>
            <person name="Lucas S."/>
            <person name="Lapidus A."/>
            <person name="Barry K."/>
            <person name="Detter J.C."/>
            <person name="Glavina del Rio T."/>
            <person name="Hammon N."/>
            <person name="Israni S."/>
            <person name="Dalin E."/>
            <person name="Tice H."/>
            <person name="Pitluck S."/>
            <person name="Chertkov O."/>
            <person name="Brettin T."/>
            <person name="Bruce D."/>
            <person name="Han C."/>
            <person name="Tapia R."/>
            <person name="Gilna P."/>
            <person name="Schmutz J."/>
            <person name="Larimer F."/>
            <person name="Land M."/>
            <person name="Hauser L."/>
            <person name="Kyrpides N."/>
            <person name="Mikhailova N."/>
            <person name="Richardson P."/>
        </authorList>
    </citation>
    <scope>NUCLEOTIDE SEQUENCE [LARGE SCALE GENOMIC DNA]</scope>
    <source>
        <strain>BNC1</strain>
    </source>
</reference>
<proteinExistence type="inferred from homology"/>
<dbReference type="EMBL" id="CP000390">
    <property type="protein sequence ID" value="ABG63058.1"/>
    <property type="molecule type" value="Genomic_DNA"/>
</dbReference>
<dbReference type="SMR" id="Q11HR7"/>
<dbReference type="STRING" id="266779.Meso_1663"/>
<dbReference type="KEGG" id="mes:Meso_1663"/>
<dbReference type="eggNOG" id="COG0097">
    <property type="taxonomic scope" value="Bacteria"/>
</dbReference>
<dbReference type="HOGENOM" id="CLU_065464_1_2_5"/>
<dbReference type="OrthoDB" id="9805007at2"/>
<dbReference type="GO" id="GO:0022625">
    <property type="term" value="C:cytosolic large ribosomal subunit"/>
    <property type="evidence" value="ECO:0007669"/>
    <property type="project" value="TreeGrafter"/>
</dbReference>
<dbReference type="GO" id="GO:0019843">
    <property type="term" value="F:rRNA binding"/>
    <property type="evidence" value="ECO:0007669"/>
    <property type="project" value="UniProtKB-UniRule"/>
</dbReference>
<dbReference type="GO" id="GO:0003735">
    <property type="term" value="F:structural constituent of ribosome"/>
    <property type="evidence" value="ECO:0007669"/>
    <property type="project" value="InterPro"/>
</dbReference>
<dbReference type="GO" id="GO:0002181">
    <property type="term" value="P:cytoplasmic translation"/>
    <property type="evidence" value="ECO:0007669"/>
    <property type="project" value="TreeGrafter"/>
</dbReference>
<dbReference type="FunFam" id="3.90.930.12:FF:000001">
    <property type="entry name" value="50S ribosomal protein L6"/>
    <property type="match status" value="1"/>
</dbReference>
<dbReference type="Gene3D" id="3.90.930.12">
    <property type="entry name" value="Ribosomal protein L6, alpha-beta domain"/>
    <property type="match status" value="2"/>
</dbReference>
<dbReference type="HAMAP" id="MF_01365_B">
    <property type="entry name" value="Ribosomal_uL6_B"/>
    <property type="match status" value="1"/>
</dbReference>
<dbReference type="InterPro" id="IPR000702">
    <property type="entry name" value="Ribosomal_uL6-like"/>
</dbReference>
<dbReference type="InterPro" id="IPR036789">
    <property type="entry name" value="Ribosomal_uL6-like_a/b-dom_sf"/>
</dbReference>
<dbReference type="InterPro" id="IPR020040">
    <property type="entry name" value="Ribosomal_uL6_a/b-dom"/>
</dbReference>
<dbReference type="InterPro" id="IPR019906">
    <property type="entry name" value="Ribosomal_uL6_bac-type"/>
</dbReference>
<dbReference type="InterPro" id="IPR002358">
    <property type="entry name" value="Ribosomal_uL6_CS"/>
</dbReference>
<dbReference type="NCBIfam" id="TIGR03654">
    <property type="entry name" value="L6_bact"/>
    <property type="match status" value="1"/>
</dbReference>
<dbReference type="PANTHER" id="PTHR11655">
    <property type="entry name" value="60S/50S RIBOSOMAL PROTEIN L6/L9"/>
    <property type="match status" value="1"/>
</dbReference>
<dbReference type="PANTHER" id="PTHR11655:SF14">
    <property type="entry name" value="LARGE RIBOSOMAL SUBUNIT PROTEIN UL6M"/>
    <property type="match status" value="1"/>
</dbReference>
<dbReference type="Pfam" id="PF00347">
    <property type="entry name" value="Ribosomal_L6"/>
    <property type="match status" value="2"/>
</dbReference>
<dbReference type="PIRSF" id="PIRSF002162">
    <property type="entry name" value="Ribosomal_L6"/>
    <property type="match status" value="1"/>
</dbReference>
<dbReference type="PRINTS" id="PR00059">
    <property type="entry name" value="RIBOSOMALL6"/>
</dbReference>
<dbReference type="SUPFAM" id="SSF56053">
    <property type="entry name" value="Ribosomal protein L6"/>
    <property type="match status" value="2"/>
</dbReference>
<dbReference type="PROSITE" id="PS00525">
    <property type="entry name" value="RIBOSOMAL_L6_1"/>
    <property type="match status" value="1"/>
</dbReference>
<name>RL6_CHESB</name>
<protein>
    <recommendedName>
        <fullName evidence="1">Large ribosomal subunit protein uL6</fullName>
    </recommendedName>
    <alternativeName>
        <fullName evidence="2">50S ribosomal protein L6</fullName>
    </alternativeName>
</protein>
<keyword id="KW-0687">Ribonucleoprotein</keyword>
<keyword id="KW-0689">Ribosomal protein</keyword>
<keyword id="KW-0694">RNA-binding</keyword>
<keyword id="KW-0699">rRNA-binding</keyword>
<evidence type="ECO:0000255" key="1">
    <source>
        <dbReference type="HAMAP-Rule" id="MF_01365"/>
    </source>
</evidence>
<evidence type="ECO:0000305" key="2"/>
<organism>
    <name type="scientific">Chelativorans sp. (strain BNC1)</name>
    <dbReference type="NCBI Taxonomy" id="266779"/>
    <lineage>
        <taxon>Bacteria</taxon>
        <taxon>Pseudomonadati</taxon>
        <taxon>Pseudomonadota</taxon>
        <taxon>Alphaproteobacteria</taxon>
        <taxon>Hyphomicrobiales</taxon>
        <taxon>Phyllobacteriaceae</taxon>
        <taxon>Chelativorans</taxon>
    </lineage>
</organism>
<comment type="function">
    <text evidence="1">This protein binds to the 23S rRNA, and is important in its secondary structure. It is located near the subunit interface in the base of the L7/L12 stalk, and near the tRNA binding site of the peptidyltransferase center.</text>
</comment>
<comment type="subunit">
    <text evidence="1">Part of the 50S ribosomal subunit.</text>
</comment>
<comment type="similarity">
    <text evidence="1">Belongs to the universal ribosomal protein uL6 family.</text>
</comment>
<accession>Q11HR7</accession>
<gene>
    <name evidence="1" type="primary">rplF</name>
    <name type="ordered locus">Meso_1663</name>
</gene>
<feature type="chain" id="PRO_0000260893" description="Large ribosomal subunit protein uL6">
    <location>
        <begin position="1"/>
        <end position="177"/>
    </location>
</feature>
<sequence>MSRIGKKPVPVPQGVTANVDGQVVTAKGPKGELKFVVNDDVLVKLEDGAIAVDPRNESKMARSKWGMSRTQIANILTGVKDGFEKRLEINGVGYRAAMQGKNLQLSLGFSHDVSYEPPTGITITVPKPTEIVVSGIDKQVVGQVAAEIRKYRGPEPYKGKGVKYAGETIVRKEGKKK</sequence>